<feature type="chain" id="PRO_0000140297" description="Peptide methionine sulfoxide reductase MsrB">
    <location>
        <begin position="1"/>
        <end position="142"/>
    </location>
</feature>
<feature type="domain" description="MsrB" evidence="2">
    <location>
        <begin position="2"/>
        <end position="125"/>
    </location>
</feature>
<feature type="active site" description="Nucleophile" evidence="2">
    <location>
        <position position="114"/>
    </location>
</feature>
<dbReference type="EC" id="1.8.4.12" evidence="1"/>
<dbReference type="EMBL" id="BX571856">
    <property type="protein sequence ID" value="CAG40433.1"/>
    <property type="molecule type" value="Genomic_DNA"/>
</dbReference>
<dbReference type="RefSeq" id="WP_000913317.1">
    <property type="nucleotide sequence ID" value="NC_002952.2"/>
</dbReference>
<dbReference type="SMR" id="Q6GGY4"/>
<dbReference type="KEGG" id="sar:SAR1436"/>
<dbReference type="HOGENOM" id="CLU_031040_8_5_9"/>
<dbReference type="Proteomes" id="UP000000596">
    <property type="component" value="Chromosome"/>
</dbReference>
<dbReference type="GO" id="GO:0005737">
    <property type="term" value="C:cytoplasm"/>
    <property type="evidence" value="ECO:0007669"/>
    <property type="project" value="TreeGrafter"/>
</dbReference>
<dbReference type="GO" id="GO:0033743">
    <property type="term" value="F:peptide-methionine (R)-S-oxide reductase activity"/>
    <property type="evidence" value="ECO:0007669"/>
    <property type="project" value="UniProtKB-UniRule"/>
</dbReference>
<dbReference type="GO" id="GO:0030091">
    <property type="term" value="P:protein repair"/>
    <property type="evidence" value="ECO:0007669"/>
    <property type="project" value="InterPro"/>
</dbReference>
<dbReference type="GO" id="GO:0006979">
    <property type="term" value="P:response to oxidative stress"/>
    <property type="evidence" value="ECO:0007669"/>
    <property type="project" value="InterPro"/>
</dbReference>
<dbReference type="FunFam" id="2.170.150.20:FF:000003">
    <property type="entry name" value="Peptide methionine sulfoxide reductase MsrB"/>
    <property type="match status" value="1"/>
</dbReference>
<dbReference type="Gene3D" id="2.170.150.20">
    <property type="entry name" value="Peptide methionine sulfoxide reductase"/>
    <property type="match status" value="1"/>
</dbReference>
<dbReference type="HAMAP" id="MF_01400">
    <property type="entry name" value="MsrB"/>
    <property type="match status" value="1"/>
</dbReference>
<dbReference type="InterPro" id="IPR028427">
    <property type="entry name" value="Met_Sox_Rdtase_MsrB"/>
</dbReference>
<dbReference type="InterPro" id="IPR002579">
    <property type="entry name" value="Met_Sox_Rdtase_MsrB_dom"/>
</dbReference>
<dbReference type="InterPro" id="IPR011057">
    <property type="entry name" value="Mss4-like_sf"/>
</dbReference>
<dbReference type="NCBIfam" id="TIGR00357">
    <property type="entry name" value="peptide-methionine (R)-S-oxide reductase MsrB"/>
    <property type="match status" value="1"/>
</dbReference>
<dbReference type="PANTHER" id="PTHR10173">
    <property type="entry name" value="METHIONINE SULFOXIDE REDUCTASE"/>
    <property type="match status" value="1"/>
</dbReference>
<dbReference type="PANTHER" id="PTHR10173:SF59">
    <property type="entry name" value="PEPTIDE METHIONINE SULFOXIDE REDUCTASE MSRA_MSRB"/>
    <property type="match status" value="1"/>
</dbReference>
<dbReference type="Pfam" id="PF01641">
    <property type="entry name" value="SelR"/>
    <property type="match status" value="1"/>
</dbReference>
<dbReference type="SUPFAM" id="SSF51316">
    <property type="entry name" value="Mss4-like"/>
    <property type="match status" value="1"/>
</dbReference>
<dbReference type="PROSITE" id="PS51790">
    <property type="entry name" value="MSRB"/>
    <property type="match status" value="1"/>
</dbReference>
<organism>
    <name type="scientific">Staphylococcus aureus (strain MRSA252)</name>
    <dbReference type="NCBI Taxonomy" id="282458"/>
    <lineage>
        <taxon>Bacteria</taxon>
        <taxon>Bacillati</taxon>
        <taxon>Bacillota</taxon>
        <taxon>Bacilli</taxon>
        <taxon>Bacillales</taxon>
        <taxon>Staphylococcaceae</taxon>
        <taxon>Staphylococcus</taxon>
    </lineage>
</organism>
<sequence length="142" mass="16263">MLKKDKSELTDIEYIVTQENGTEPPFMNEYWNHFAKGIYVDKISGKPLFTSEEKFHSECGWPSFSKALDDDEIIELVDKSFGMVRTEVRSEESNSHLGHVFNDGPKESGGLRYCINSAAIQFIPYEKLEELGYGDLISHFDK</sequence>
<accession>Q6GGY4</accession>
<protein>
    <recommendedName>
        <fullName evidence="1">Peptide methionine sulfoxide reductase MsrB</fullName>
        <ecNumber evidence="1">1.8.4.12</ecNumber>
    </recommendedName>
    <alternativeName>
        <fullName evidence="1">Peptide-methionine (R)-S-oxide reductase</fullName>
    </alternativeName>
</protein>
<name>MSRB_STAAR</name>
<gene>
    <name evidence="1" type="primary">msrB</name>
    <name type="ordered locus">SAR1436</name>
</gene>
<reference key="1">
    <citation type="journal article" date="2004" name="Proc. Natl. Acad. Sci. U.S.A.">
        <title>Complete genomes of two clinical Staphylococcus aureus strains: evidence for the rapid evolution of virulence and drug resistance.</title>
        <authorList>
            <person name="Holden M.T.G."/>
            <person name="Feil E.J."/>
            <person name="Lindsay J.A."/>
            <person name="Peacock S.J."/>
            <person name="Day N.P.J."/>
            <person name="Enright M.C."/>
            <person name="Foster T.J."/>
            <person name="Moore C.E."/>
            <person name="Hurst L."/>
            <person name="Atkin R."/>
            <person name="Barron A."/>
            <person name="Bason N."/>
            <person name="Bentley S.D."/>
            <person name="Chillingworth C."/>
            <person name="Chillingworth T."/>
            <person name="Churcher C."/>
            <person name="Clark L."/>
            <person name="Corton C."/>
            <person name="Cronin A."/>
            <person name="Doggett J."/>
            <person name="Dowd L."/>
            <person name="Feltwell T."/>
            <person name="Hance Z."/>
            <person name="Harris B."/>
            <person name="Hauser H."/>
            <person name="Holroyd S."/>
            <person name="Jagels K."/>
            <person name="James K.D."/>
            <person name="Lennard N."/>
            <person name="Line A."/>
            <person name="Mayes R."/>
            <person name="Moule S."/>
            <person name="Mungall K."/>
            <person name="Ormond D."/>
            <person name="Quail M.A."/>
            <person name="Rabbinowitsch E."/>
            <person name="Rutherford K.M."/>
            <person name="Sanders M."/>
            <person name="Sharp S."/>
            <person name="Simmonds M."/>
            <person name="Stevens K."/>
            <person name="Whitehead S."/>
            <person name="Barrell B.G."/>
            <person name="Spratt B.G."/>
            <person name="Parkhill J."/>
        </authorList>
    </citation>
    <scope>NUCLEOTIDE SEQUENCE [LARGE SCALE GENOMIC DNA]</scope>
    <source>
        <strain>MRSA252</strain>
    </source>
</reference>
<evidence type="ECO:0000255" key="1">
    <source>
        <dbReference type="HAMAP-Rule" id="MF_01400"/>
    </source>
</evidence>
<evidence type="ECO:0000255" key="2">
    <source>
        <dbReference type="PROSITE-ProRule" id="PRU01126"/>
    </source>
</evidence>
<proteinExistence type="inferred from homology"/>
<comment type="catalytic activity">
    <reaction evidence="1">
        <text>L-methionyl-[protein] + [thioredoxin]-disulfide + H2O = L-methionyl-(R)-S-oxide-[protein] + [thioredoxin]-dithiol</text>
        <dbReference type="Rhea" id="RHEA:24164"/>
        <dbReference type="Rhea" id="RHEA-COMP:10698"/>
        <dbReference type="Rhea" id="RHEA-COMP:10700"/>
        <dbReference type="Rhea" id="RHEA-COMP:12313"/>
        <dbReference type="Rhea" id="RHEA-COMP:12314"/>
        <dbReference type="ChEBI" id="CHEBI:15377"/>
        <dbReference type="ChEBI" id="CHEBI:16044"/>
        <dbReference type="ChEBI" id="CHEBI:29950"/>
        <dbReference type="ChEBI" id="CHEBI:45764"/>
        <dbReference type="ChEBI" id="CHEBI:50058"/>
        <dbReference type="EC" id="1.8.4.12"/>
    </reaction>
</comment>
<comment type="similarity">
    <text evidence="1">Belongs to the MsrB Met sulfoxide reductase family.</text>
</comment>
<keyword id="KW-0560">Oxidoreductase</keyword>